<accession>A9R5M0</accession>
<feature type="chain" id="PRO_1000126114" description="Glycogen synthase">
    <location>
        <begin position="1"/>
        <end position="476"/>
    </location>
</feature>
<feature type="binding site" evidence="1">
    <location>
        <position position="15"/>
    </location>
    <ligand>
        <name>ADP-alpha-D-glucose</name>
        <dbReference type="ChEBI" id="CHEBI:57498"/>
    </ligand>
</feature>
<sequence>MRVLHVCSELFPLLKTGGLADVIGALPAAQLAEGADVRIILPAFPDLRRGIPETVLVREIDTFAGRVALRYGHYRGIGIYLIDAPALYDRAGSPYHDASLYAYSDNYLRFALLGWMACELACGLDGYWRPEVVHAHDWHAGLTCAYLAARGRPARSVFTVHNLAYQGLFSADHLSELHLPAEFFQIYGLEFYGQISYLKAGLFFADHVTTVSPTYAKEITQPAFGYGMEGLLQALARQGRLTGILNGVDSDIWDPQSDTLLPTRYDAENLQAKAINKTHLQTAMGLQLAENKPIFAVVSRLTVQKGLDLVLEALPELLALGGQLVVLGSGDATLQEAFLAAAAEHSGQVGVQIGYHEAFSHRIIAGSDVILVPSRFEPCGLTQLYGLKYGTLPLVRHTGGLADTVVDCALENLADGSASGFVFNECEAQALVKAIRRAFVLWSRPKHWRHVQRHAMRLDFGWQLAAVDYLSLYRRL</sequence>
<comment type="function">
    <text evidence="1">Synthesizes alpha-1,4-glucan chains using ADP-glucose.</text>
</comment>
<comment type="catalytic activity">
    <reaction evidence="1">
        <text>[(1-&gt;4)-alpha-D-glucosyl](n) + ADP-alpha-D-glucose = [(1-&gt;4)-alpha-D-glucosyl](n+1) + ADP + H(+)</text>
        <dbReference type="Rhea" id="RHEA:18189"/>
        <dbReference type="Rhea" id="RHEA-COMP:9584"/>
        <dbReference type="Rhea" id="RHEA-COMP:9587"/>
        <dbReference type="ChEBI" id="CHEBI:15378"/>
        <dbReference type="ChEBI" id="CHEBI:15444"/>
        <dbReference type="ChEBI" id="CHEBI:57498"/>
        <dbReference type="ChEBI" id="CHEBI:456216"/>
        <dbReference type="EC" id="2.4.1.21"/>
    </reaction>
</comment>
<comment type="pathway">
    <text evidence="1">Glycan biosynthesis; glycogen biosynthesis.</text>
</comment>
<comment type="similarity">
    <text evidence="1">Belongs to the glycosyltransferase 1 family. Bacterial/plant glycogen synthase subfamily.</text>
</comment>
<reference key="1">
    <citation type="journal article" date="2010" name="J. Bacteriol.">
        <title>Genome sequence of the deep-rooted Yersinia pestis strain Angola reveals new insights into the evolution and pangenome of the plague bacterium.</title>
        <authorList>
            <person name="Eppinger M."/>
            <person name="Worsham P.L."/>
            <person name="Nikolich M.P."/>
            <person name="Riley D.R."/>
            <person name="Sebastian Y."/>
            <person name="Mou S."/>
            <person name="Achtman M."/>
            <person name="Lindler L.E."/>
            <person name="Ravel J."/>
        </authorList>
    </citation>
    <scope>NUCLEOTIDE SEQUENCE [LARGE SCALE GENOMIC DNA]</scope>
    <source>
        <strain>Angola</strain>
    </source>
</reference>
<keyword id="KW-0320">Glycogen biosynthesis</keyword>
<keyword id="KW-0328">Glycosyltransferase</keyword>
<keyword id="KW-0808">Transferase</keyword>
<gene>
    <name evidence="1" type="primary">glgA</name>
    <name type="ordered locus">YpAngola_A4121</name>
</gene>
<evidence type="ECO:0000255" key="1">
    <source>
        <dbReference type="HAMAP-Rule" id="MF_00484"/>
    </source>
</evidence>
<organism>
    <name type="scientific">Yersinia pestis bv. Antiqua (strain Angola)</name>
    <dbReference type="NCBI Taxonomy" id="349746"/>
    <lineage>
        <taxon>Bacteria</taxon>
        <taxon>Pseudomonadati</taxon>
        <taxon>Pseudomonadota</taxon>
        <taxon>Gammaproteobacteria</taxon>
        <taxon>Enterobacterales</taxon>
        <taxon>Yersiniaceae</taxon>
        <taxon>Yersinia</taxon>
    </lineage>
</organism>
<name>GLGA_YERPG</name>
<protein>
    <recommendedName>
        <fullName evidence="1">Glycogen synthase</fullName>
        <ecNumber evidence="1">2.4.1.21</ecNumber>
    </recommendedName>
    <alternativeName>
        <fullName evidence="1">Starch [bacterial glycogen] synthase</fullName>
    </alternativeName>
</protein>
<proteinExistence type="inferred from homology"/>
<dbReference type="EC" id="2.4.1.21" evidence="1"/>
<dbReference type="EMBL" id="CP000901">
    <property type="protein sequence ID" value="ABX85784.1"/>
    <property type="molecule type" value="Genomic_DNA"/>
</dbReference>
<dbReference type="RefSeq" id="WP_002209498.1">
    <property type="nucleotide sequence ID" value="NZ_CP009935.1"/>
</dbReference>
<dbReference type="SMR" id="A9R5M0"/>
<dbReference type="CAZy" id="GT5">
    <property type="family name" value="Glycosyltransferase Family 5"/>
</dbReference>
<dbReference type="GeneID" id="57974765"/>
<dbReference type="KEGG" id="ypg:YpAngola_A4121"/>
<dbReference type="PATRIC" id="fig|349746.12.peg.856"/>
<dbReference type="UniPathway" id="UPA00164"/>
<dbReference type="GO" id="GO:0005829">
    <property type="term" value="C:cytosol"/>
    <property type="evidence" value="ECO:0007669"/>
    <property type="project" value="TreeGrafter"/>
</dbReference>
<dbReference type="GO" id="GO:0009011">
    <property type="term" value="F:alpha-1,4-glucan glucosyltransferase (ADP-glucose donor) activity"/>
    <property type="evidence" value="ECO:0007669"/>
    <property type="project" value="UniProtKB-UniRule"/>
</dbReference>
<dbReference type="GO" id="GO:0004373">
    <property type="term" value="F:alpha-1,4-glucan glucosyltransferase (UDP-glucose donor) activity"/>
    <property type="evidence" value="ECO:0007669"/>
    <property type="project" value="InterPro"/>
</dbReference>
<dbReference type="GO" id="GO:0005978">
    <property type="term" value="P:glycogen biosynthetic process"/>
    <property type="evidence" value="ECO:0007669"/>
    <property type="project" value="UniProtKB-UniRule"/>
</dbReference>
<dbReference type="CDD" id="cd03791">
    <property type="entry name" value="GT5_Glycogen_synthase_DULL1-like"/>
    <property type="match status" value="1"/>
</dbReference>
<dbReference type="FunFam" id="3.40.50.2000:FF:000011">
    <property type="entry name" value="Glycogen synthase"/>
    <property type="match status" value="1"/>
</dbReference>
<dbReference type="Gene3D" id="3.40.50.2000">
    <property type="entry name" value="Glycogen Phosphorylase B"/>
    <property type="match status" value="2"/>
</dbReference>
<dbReference type="HAMAP" id="MF_00484">
    <property type="entry name" value="Glycogen_synth"/>
    <property type="match status" value="1"/>
</dbReference>
<dbReference type="InterPro" id="IPR001296">
    <property type="entry name" value="Glyco_trans_1"/>
</dbReference>
<dbReference type="InterPro" id="IPR011835">
    <property type="entry name" value="GS/SS"/>
</dbReference>
<dbReference type="InterPro" id="IPR013534">
    <property type="entry name" value="Starch_synth_cat_dom"/>
</dbReference>
<dbReference type="NCBIfam" id="TIGR02095">
    <property type="entry name" value="glgA"/>
    <property type="match status" value="1"/>
</dbReference>
<dbReference type="NCBIfam" id="NF001899">
    <property type="entry name" value="PRK00654.1-2"/>
    <property type="match status" value="1"/>
</dbReference>
<dbReference type="PANTHER" id="PTHR45825:SF11">
    <property type="entry name" value="ALPHA AMYLASE DOMAIN-CONTAINING PROTEIN"/>
    <property type="match status" value="1"/>
</dbReference>
<dbReference type="PANTHER" id="PTHR45825">
    <property type="entry name" value="GRANULE-BOUND STARCH SYNTHASE 1, CHLOROPLASTIC/AMYLOPLASTIC"/>
    <property type="match status" value="1"/>
</dbReference>
<dbReference type="Pfam" id="PF08323">
    <property type="entry name" value="Glyco_transf_5"/>
    <property type="match status" value="1"/>
</dbReference>
<dbReference type="Pfam" id="PF00534">
    <property type="entry name" value="Glycos_transf_1"/>
    <property type="match status" value="1"/>
</dbReference>
<dbReference type="SUPFAM" id="SSF53756">
    <property type="entry name" value="UDP-Glycosyltransferase/glycogen phosphorylase"/>
    <property type="match status" value="1"/>
</dbReference>